<name>VME1_BRV1</name>
<organismHost>
    <name type="scientific">Bos taurus</name>
    <name type="common">Bovine</name>
    <dbReference type="NCBI Taxonomy" id="9913"/>
</organismHost>
<dbReference type="EMBL" id="AF076621">
    <property type="protein sequence ID" value="AAD03841.1"/>
    <property type="molecule type" value="Genomic_RNA"/>
</dbReference>
<dbReference type="EMBL" id="AY427798">
    <property type="protein sequence ID" value="AAS17960.1"/>
    <property type="molecule type" value="Genomic_RNA"/>
</dbReference>
<dbReference type="RefSeq" id="YP_337908.1">
    <property type="nucleotide sequence ID" value="NC_007447.1"/>
</dbReference>
<dbReference type="SMR" id="O90305"/>
<dbReference type="GeneID" id="3707769"/>
<dbReference type="KEGG" id="vg:3707769"/>
<dbReference type="Proteomes" id="UP000000355">
    <property type="component" value="Segment"/>
</dbReference>
<dbReference type="GO" id="GO:0044178">
    <property type="term" value="C:host cell Golgi membrane"/>
    <property type="evidence" value="ECO:0007669"/>
    <property type="project" value="UniProtKB-SubCell"/>
</dbReference>
<dbReference type="GO" id="GO:0016020">
    <property type="term" value="C:membrane"/>
    <property type="evidence" value="ECO:0007669"/>
    <property type="project" value="UniProtKB-KW"/>
</dbReference>
<dbReference type="GO" id="GO:0019031">
    <property type="term" value="C:viral envelope"/>
    <property type="evidence" value="ECO:0007669"/>
    <property type="project" value="UniProtKB-KW"/>
</dbReference>
<dbReference type="GO" id="GO:0055036">
    <property type="term" value="C:virion membrane"/>
    <property type="evidence" value="ECO:0007669"/>
    <property type="project" value="UniProtKB-SubCell"/>
</dbReference>
<dbReference type="GO" id="GO:0039660">
    <property type="term" value="F:structural constituent of virion"/>
    <property type="evidence" value="ECO:0007669"/>
    <property type="project" value="UniProtKB-KW"/>
</dbReference>
<dbReference type="InterPro" id="IPR024251">
    <property type="entry name" value="M_Torovirus"/>
</dbReference>
<dbReference type="Pfam" id="PF10943">
    <property type="entry name" value="DUF2632"/>
    <property type="match status" value="1"/>
</dbReference>
<sequence length="233" mass="26294">MFETNYWPFPDQAPNPFNAQVEQLSATENVYIFLTTLFGILQLVYVIFKLLCTMFPALHWSPIWRGLENFWLFLSLASLAIAYWWLPSMTFTGYWALTIIATILGLIMLIMMSVKFVSFVKLFYRTGSFAIAIRGPIVLVALDVTIKLHCTPFAILVKEVGNIFYLSEYCNKPLTAAQVAALRICVGGQWFAYTRSTTTSAAKVAAANSTAKYHLFVLQGVAEYTQLSSVKFE</sequence>
<accession>O90305</accession>
<accession>Q3T8I9</accession>
<feature type="chain" id="PRO_0000283930" description="Membrane protein">
    <location>
        <begin position="1"/>
        <end position="233"/>
    </location>
</feature>
<feature type="topological domain" description="Virion surface" evidence="2">
    <location>
        <begin position="1"/>
        <end position="31"/>
    </location>
</feature>
<feature type="transmembrane region" description="Helical" evidence="2">
    <location>
        <begin position="32"/>
        <end position="52"/>
    </location>
</feature>
<feature type="topological domain" description="Intravirion" evidence="2">
    <location>
        <begin position="53"/>
        <end position="69"/>
    </location>
</feature>
<feature type="transmembrane region" description="Helical" evidence="2">
    <location>
        <begin position="70"/>
        <end position="90"/>
    </location>
</feature>
<feature type="topological domain" description="Virion surface" evidence="2">
    <location>
        <begin position="91"/>
        <end position="93"/>
    </location>
</feature>
<feature type="transmembrane region" description="Helical" evidence="2">
    <location>
        <begin position="94"/>
        <end position="114"/>
    </location>
</feature>
<feature type="topological domain" description="Intravirion" evidence="2">
    <location>
        <begin position="115"/>
        <end position="233"/>
    </location>
</feature>
<feature type="sequence variant">
    <original>G</original>
    <variation>V</variation>
    <location>
        <position position="105"/>
    </location>
</feature>
<feature type="sequence variant">
    <original>S</original>
    <variation>F</variation>
    <location>
        <position position="113"/>
    </location>
</feature>
<feature type="sequence variant">
    <original>K</original>
    <variation>R</variation>
    <location>
        <position position="121"/>
    </location>
</feature>
<feature type="sequence variant">
    <original>E</original>
    <variation>D</variation>
    <location>
        <position position="223"/>
    </location>
</feature>
<evidence type="ECO:0000250" key="1"/>
<evidence type="ECO:0000255" key="2"/>
<evidence type="ECO:0000305" key="3"/>
<proteinExistence type="inferred from homology"/>
<protein>
    <recommendedName>
        <fullName>Membrane protein</fullName>
        <shortName>M protein</shortName>
    </recommendedName>
    <alternativeName>
        <fullName>E1 glycoprotein</fullName>
    </alternativeName>
    <alternativeName>
        <fullName>Matrix glycoprotein</fullName>
    </alternativeName>
    <alternativeName>
        <fullName>Membrane glycoprotein</fullName>
    </alternativeName>
</protein>
<comment type="function">
    <text evidence="1">Component of the viral envelope that plays a central role in virus morphogenesis and assembly via its interactions with other viral proteins.</text>
</comment>
<comment type="subunit">
    <text evidence="1">Interacts with many viral proteins in infected cells. Interacts with envelope E protein in the budding compartment of the host cell, which is located between endoplasmic reticulum and the Golgi complex. Forms a complex with HE and S proteins. Interacts with nucleocapsid N protein. This interaction probably participates in the viral mRNA packaging into the virus (By similarity).</text>
</comment>
<comment type="subcellular location">
    <subcellularLocation>
        <location evidence="3">Virion membrane</location>
        <topology evidence="3">Multi-pass membrane protein</topology>
    </subcellularLocation>
    <subcellularLocation>
        <location evidence="3">Host Golgi apparatus membrane</location>
        <topology evidence="3">Multi-pass membrane protein</topology>
    </subcellularLocation>
</comment>
<comment type="similarity">
    <text evidence="3">Belongs to the torovirinae M protein family.</text>
</comment>
<reference key="1">
    <citation type="journal article" date="1998" name="Virus Res.">
        <title>Bovine torovirus: sequencing of the structural genes and expression of the nucleocapsid protein of Breda virus.</title>
        <authorList>
            <person name="Duckmanton L.M."/>
            <person name="Tellier R."/>
            <person name="Liu P."/>
            <person name="Petric M."/>
        </authorList>
    </citation>
    <scope>NUCLEOTIDE SEQUENCE [GENOMIC RNA]</scope>
</reference>
<reference key="2">
    <citation type="journal article" date="2006" name="Virus Res.">
        <title>The complete sequence of the bovine torovirus genome.</title>
        <authorList>
            <person name="Draker R."/>
            <person name="Roper R.L."/>
            <person name="Petric M."/>
            <person name="Tellier R."/>
        </authorList>
    </citation>
    <scope>NUCLEOTIDE SEQUENCE [GENOMIC RNA]</scope>
</reference>
<keyword id="KW-1040">Host Golgi apparatus</keyword>
<keyword id="KW-1043">Host membrane</keyword>
<keyword id="KW-0472">Membrane</keyword>
<keyword id="KW-1185">Reference proteome</keyword>
<keyword id="KW-0812">Transmembrane</keyword>
<keyword id="KW-1133">Transmembrane helix</keyword>
<keyword id="KW-0261">Viral envelope protein</keyword>
<keyword id="KW-0468">Viral matrix protein</keyword>
<keyword id="KW-0946">Virion</keyword>
<organism>
    <name type="scientific">Breda virus 1</name>
    <name type="common">BRV-1</name>
    <dbReference type="NCBI Taxonomy" id="360393"/>
    <lineage>
        <taxon>Viruses</taxon>
        <taxon>Riboviria</taxon>
        <taxon>Orthornavirae</taxon>
        <taxon>Pisuviricota</taxon>
        <taxon>Pisoniviricetes</taxon>
        <taxon>Nidovirales</taxon>
        <taxon>Tornidovirineae</taxon>
        <taxon>Tobaniviridae</taxon>
        <taxon>Torovirinae</taxon>
        <taxon>Torovirus</taxon>
        <taxon>Renitovirus</taxon>
        <taxon>Bovine torovirus</taxon>
    </lineage>
</organism>
<gene>
    <name type="primary">M</name>
</gene>